<reference key="1">
    <citation type="book" date="2006" name="Gram positive pathogens, 2nd edition">
        <title>The Staphylococcus aureus NCTC 8325 genome.</title>
        <editorList>
            <person name="Fischetti V."/>
            <person name="Novick R."/>
            <person name="Ferretti J."/>
            <person name="Portnoy D."/>
            <person name="Rood J."/>
        </editorList>
        <authorList>
            <person name="Gillaspy A.F."/>
            <person name="Worrell V."/>
            <person name="Orvis J."/>
            <person name="Roe B.A."/>
            <person name="Dyer D.W."/>
            <person name="Iandolo J.J."/>
        </authorList>
    </citation>
    <scope>NUCLEOTIDE SEQUENCE [LARGE SCALE GENOMIC DNA]</scope>
    <source>
        <strain>NCTC 8325 / PS 47</strain>
    </source>
</reference>
<sequence>MIKIPRGTQDILPEDSKKWRYIENQLDELMTFYNYKEIRTPIFESTDLFARGVGDSTDVVQKEMYTFKDKGDRSITLRPEGTAAVVRSYIEHKMQGNPNQPIKLYYNGPMFRYERKQKGRYRQFNQFGVEAIGAENPSVDAEVLAMVMHIYQSFGLKHLKLVINSVGDMASRKEYNEALVKHFEPVIHEFCSDCQSRLHTNPMRILDCKVDRDKEAIKTAPRITDFLNEESKAYYEQVKAYLDDLGIPYIEDPNLVRGLDYYTHTAFELMMDNPNYDGAITTLCGGGRYNGLLELLDGPSETGIGFALSIERLLLALEEEGIELDIEENLDLFIVTMGDQADRYAVKLLNHLRHNGIKADKDYLQRKIKGQMKQADRLGAKFTIVIGDQELENNKIDVKNMTTGESETIELDALVEYFKK</sequence>
<evidence type="ECO:0000255" key="1">
    <source>
        <dbReference type="HAMAP-Rule" id="MF_00127"/>
    </source>
</evidence>
<protein>
    <recommendedName>
        <fullName evidence="1">Histidine--tRNA ligase</fullName>
        <ecNumber evidence="1">6.1.1.21</ecNumber>
    </recommendedName>
    <alternativeName>
        <fullName evidence="1">Histidyl-tRNA synthetase</fullName>
        <shortName evidence="1">HisRS</shortName>
    </alternativeName>
</protein>
<dbReference type="EC" id="6.1.1.21" evidence="1"/>
<dbReference type="EMBL" id="CP000253">
    <property type="protein sequence ID" value="ABD30810.1"/>
    <property type="molecule type" value="Genomic_DNA"/>
</dbReference>
<dbReference type="RefSeq" id="WP_000590826.1">
    <property type="nucleotide sequence ID" value="NZ_LS483365.1"/>
</dbReference>
<dbReference type="RefSeq" id="YP_500246.1">
    <property type="nucleotide sequence ID" value="NC_007795.1"/>
</dbReference>
<dbReference type="SMR" id="Q2FXU4"/>
<dbReference type="STRING" id="93061.SAOUHSC_01738"/>
<dbReference type="PaxDb" id="1280-SAXN108_1658"/>
<dbReference type="GeneID" id="3921087"/>
<dbReference type="KEGG" id="sao:SAOUHSC_01738"/>
<dbReference type="PATRIC" id="fig|93061.5.peg.1584"/>
<dbReference type="eggNOG" id="COG0124">
    <property type="taxonomic scope" value="Bacteria"/>
</dbReference>
<dbReference type="HOGENOM" id="CLU_025113_1_1_9"/>
<dbReference type="OrthoDB" id="9800814at2"/>
<dbReference type="PRO" id="PR:Q2FXU4"/>
<dbReference type="Proteomes" id="UP000008816">
    <property type="component" value="Chromosome"/>
</dbReference>
<dbReference type="GO" id="GO:0005737">
    <property type="term" value="C:cytoplasm"/>
    <property type="evidence" value="ECO:0007669"/>
    <property type="project" value="UniProtKB-SubCell"/>
</dbReference>
<dbReference type="GO" id="GO:0005524">
    <property type="term" value="F:ATP binding"/>
    <property type="evidence" value="ECO:0007669"/>
    <property type="project" value="UniProtKB-UniRule"/>
</dbReference>
<dbReference type="GO" id="GO:0140096">
    <property type="term" value="F:catalytic activity, acting on a protein"/>
    <property type="evidence" value="ECO:0007669"/>
    <property type="project" value="UniProtKB-ARBA"/>
</dbReference>
<dbReference type="GO" id="GO:0004821">
    <property type="term" value="F:histidine-tRNA ligase activity"/>
    <property type="evidence" value="ECO:0000318"/>
    <property type="project" value="GO_Central"/>
</dbReference>
<dbReference type="GO" id="GO:0016740">
    <property type="term" value="F:transferase activity"/>
    <property type="evidence" value="ECO:0007669"/>
    <property type="project" value="UniProtKB-ARBA"/>
</dbReference>
<dbReference type="GO" id="GO:0006427">
    <property type="term" value="P:histidyl-tRNA aminoacylation"/>
    <property type="evidence" value="ECO:0000318"/>
    <property type="project" value="GO_Central"/>
</dbReference>
<dbReference type="CDD" id="cd00738">
    <property type="entry name" value="HGTP_anticodon"/>
    <property type="match status" value="1"/>
</dbReference>
<dbReference type="CDD" id="cd00773">
    <property type="entry name" value="HisRS-like_core"/>
    <property type="match status" value="1"/>
</dbReference>
<dbReference type="FunFam" id="3.30.930.10:FF:000005">
    <property type="entry name" value="Histidine--tRNA ligase"/>
    <property type="match status" value="1"/>
</dbReference>
<dbReference type="Gene3D" id="3.40.50.800">
    <property type="entry name" value="Anticodon-binding domain"/>
    <property type="match status" value="1"/>
</dbReference>
<dbReference type="Gene3D" id="3.30.930.10">
    <property type="entry name" value="Bira Bifunctional Protein, Domain 2"/>
    <property type="match status" value="1"/>
</dbReference>
<dbReference type="HAMAP" id="MF_00127">
    <property type="entry name" value="His_tRNA_synth"/>
    <property type="match status" value="1"/>
</dbReference>
<dbReference type="InterPro" id="IPR006195">
    <property type="entry name" value="aa-tRNA-synth_II"/>
</dbReference>
<dbReference type="InterPro" id="IPR045864">
    <property type="entry name" value="aa-tRNA-synth_II/BPL/LPL"/>
</dbReference>
<dbReference type="InterPro" id="IPR004154">
    <property type="entry name" value="Anticodon-bd"/>
</dbReference>
<dbReference type="InterPro" id="IPR036621">
    <property type="entry name" value="Anticodon-bd_dom_sf"/>
</dbReference>
<dbReference type="InterPro" id="IPR015807">
    <property type="entry name" value="His-tRNA-ligase"/>
</dbReference>
<dbReference type="InterPro" id="IPR041715">
    <property type="entry name" value="HisRS-like_core"/>
</dbReference>
<dbReference type="InterPro" id="IPR004516">
    <property type="entry name" value="HisRS/HisZ"/>
</dbReference>
<dbReference type="NCBIfam" id="TIGR00442">
    <property type="entry name" value="hisS"/>
    <property type="match status" value="1"/>
</dbReference>
<dbReference type="PANTHER" id="PTHR43707:SF1">
    <property type="entry name" value="HISTIDINE--TRNA LIGASE, MITOCHONDRIAL-RELATED"/>
    <property type="match status" value="1"/>
</dbReference>
<dbReference type="PANTHER" id="PTHR43707">
    <property type="entry name" value="HISTIDYL-TRNA SYNTHETASE"/>
    <property type="match status" value="1"/>
</dbReference>
<dbReference type="Pfam" id="PF03129">
    <property type="entry name" value="HGTP_anticodon"/>
    <property type="match status" value="1"/>
</dbReference>
<dbReference type="Pfam" id="PF13393">
    <property type="entry name" value="tRNA-synt_His"/>
    <property type="match status" value="1"/>
</dbReference>
<dbReference type="PIRSF" id="PIRSF001549">
    <property type="entry name" value="His-tRNA_synth"/>
    <property type="match status" value="1"/>
</dbReference>
<dbReference type="SUPFAM" id="SSF52954">
    <property type="entry name" value="Class II aaRS ABD-related"/>
    <property type="match status" value="1"/>
</dbReference>
<dbReference type="SUPFAM" id="SSF55681">
    <property type="entry name" value="Class II aaRS and biotin synthetases"/>
    <property type="match status" value="1"/>
</dbReference>
<dbReference type="PROSITE" id="PS50862">
    <property type="entry name" value="AA_TRNA_LIGASE_II"/>
    <property type="match status" value="1"/>
</dbReference>
<organism>
    <name type="scientific">Staphylococcus aureus (strain NCTC 8325 / PS 47)</name>
    <dbReference type="NCBI Taxonomy" id="93061"/>
    <lineage>
        <taxon>Bacteria</taxon>
        <taxon>Bacillati</taxon>
        <taxon>Bacillota</taxon>
        <taxon>Bacilli</taxon>
        <taxon>Bacillales</taxon>
        <taxon>Staphylococcaceae</taxon>
        <taxon>Staphylococcus</taxon>
    </lineage>
</organism>
<feature type="chain" id="PRO_1000016460" description="Histidine--tRNA ligase">
    <location>
        <begin position="1"/>
        <end position="420"/>
    </location>
</feature>
<accession>Q2FXU4</accession>
<gene>
    <name evidence="1" type="primary">hisS</name>
    <name type="ordered locus">SAOUHSC_01738</name>
</gene>
<name>SYH_STAA8</name>
<comment type="catalytic activity">
    <reaction evidence="1">
        <text>tRNA(His) + L-histidine + ATP = L-histidyl-tRNA(His) + AMP + diphosphate + H(+)</text>
        <dbReference type="Rhea" id="RHEA:17313"/>
        <dbReference type="Rhea" id="RHEA-COMP:9665"/>
        <dbReference type="Rhea" id="RHEA-COMP:9689"/>
        <dbReference type="ChEBI" id="CHEBI:15378"/>
        <dbReference type="ChEBI" id="CHEBI:30616"/>
        <dbReference type="ChEBI" id="CHEBI:33019"/>
        <dbReference type="ChEBI" id="CHEBI:57595"/>
        <dbReference type="ChEBI" id="CHEBI:78442"/>
        <dbReference type="ChEBI" id="CHEBI:78527"/>
        <dbReference type="ChEBI" id="CHEBI:456215"/>
        <dbReference type="EC" id="6.1.1.21"/>
    </reaction>
</comment>
<comment type="subunit">
    <text evidence="1">Homodimer.</text>
</comment>
<comment type="subcellular location">
    <subcellularLocation>
        <location evidence="1">Cytoplasm</location>
    </subcellularLocation>
</comment>
<comment type="similarity">
    <text evidence="1">Belongs to the class-II aminoacyl-tRNA synthetase family.</text>
</comment>
<proteinExistence type="inferred from homology"/>
<keyword id="KW-0030">Aminoacyl-tRNA synthetase</keyword>
<keyword id="KW-0067">ATP-binding</keyword>
<keyword id="KW-0963">Cytoplasm</keyword>
<keyword id="KW-0436">Ligase</keyword>
<keyword id="KW-0547">Nucleotide-binding</keyword>
<keyword id="KW-0648">Protein biosynthesis</keyword>
<keyword id="KW-1185">Reference proteome</keyword>